<evidence type="ECO:0000255" key="1">
    <source>
        <dbReference type="HAMAP-Rule" id="MF_01690"/>
    </source>
</evidence>
<feature type="chain" id="PRO_1000187446" description="Succinyl-diaminopimelate desuccinylase">
    <location>
        <begin position="1"/>
        <end position="377"/>
    </location>
</feature>
<feature type="active site" evidence="1">
    <location>
        <position position="70"/>
    </location>
</feature>
<feature type="active site" description="Proton acceptor" evidence="1">
    <location>
        <position position="135"/>
    </location>
</feature>
<feature type="binding site" evidence="1">
    <location>
        <position position="68"/>
    </location>
    <ligand>
        <name>Zn(2+)</name>
        <dbReference type="ChEBI" id="CHEBI:29105"/>
        <label>1</label>
    </ligand>
</feature>
<feature type="binding site" evidence="1">
    <location>
        <position position="101"/>
    </location>
    <ligand>
        <name>Zn(2+)</name>
        <dbReference type="ChEBI" id="CHEBI:29105"/>
        <label>1</label>
    </ligand>
</feature>
<feature type="binding site" evidence="1">
    <location>
        <position position="101"/>
    </location>
    <ligand>
        <name>Zn(2+)</name>
        <dbReference type="ChEBI" id="CHEBI:29105"/>
        <label>2</label>
    </ligand>
</feature>
<feature type="binding site" evidence="1">
    <location>
        <position position="136"/>
    </location>
    <ligand>
        <name>Zn(2+)</name>
        <dbReference type="ChEBI" id="CHEBI:29105"/>
        <label>2</label>
    </ligand>
</feature>
<feature type="binding site" evidence="1">
    <location>
        <position position="164"/>
    </location>
    <ligand>
        <name>Zn(2+)</name>
        <dbReference type="ChEBI" id="CHEBI:29105"/>
        <label>1</label>
    </ligand>
</feature>
<feature type="binding site" evidence="1">
    <location>
        <position position="350"/>
    </location>
    <ligand>
        <name>Zn(2+)</name>
        <dbReference type="ChEBI" id="CHEBI:29105"/>
        <label>2</label>
    </ligand>
</feature>
<reference key="1">
    <citation type="journal article" date="2008" name="PLoS ONE">
        <title>A recalibrated molecular clock and independent origins for the cholera pandemic clones.</title>
        <authorList>
            <person name="Feng L."/>
            <person name="Reeves P.R."/>
            <person name="Lan R."/>
            <person name="Ren Y."/>
            <person name="Gao C."/>
            <person name="Zhou Z."/>
            <person name="Ren Y."/>
            <person name="Cheng J."/>
            <person name="Wang W."/>
            <person name="Wang J."/>
            <person name="Qian W."/>
            <person name="Li D."/>
            <person name="Wang L."/>
        </authorList>
    </citation>
    <scope>NUCLEOTIDE SEQUENCE [LARGE SCALE GENOMIC DNA]</scope>
    <source>
        <strain>M66-2</strain>
    </source>
</reference>
<proteinExistence type="inferred from homology"/>
<keyword id="KW-0028">Amino-acid biosynthesis</keyword>
<keyword id="KW-0170">Cobalt</keyword>
<keyword id="KW-0220">Diaminopimelate biosynthesis</keyword>
<keyword id="KW-0378">Hydrolase</keyword>
<keyword id="KW-0457">Lysine biosynthesis</keyword>
<keyword id="KW-0479">Metal-binding</keyword>
<keyword id="KW-0862">Zinc</keyword>
<organism>
    <name type="scientific">Vibrio cholerae serotype O1 (strain M66-2)</name>
    <dbReference type="NCBI Taxonomy" id="579112"/>
    <lineage>
        <taxon>Bacteria</taxon>
        <taxon>Pseudomonadati</taxon>
        <taxon>Pseudomonadota</taxon>
        <taxon>Gammaproteobacteria</taxon>
        <taxon>Vibrionales</taxon>
        <taxon>Vibrionaceae</taxon>
        <taxon>Vibrio</taxon>
    </lineage>
</organism>
<name>DAPE_VIBCM</name>
<dbReference type="EC" id="3.5.1.18" evidence="1"/>
<dbReference type="EMBL" id="CP001233">
    <property type="protein sequence ID" value="ACP06377.1"/>
    <property type="molecule type" value="Genomic_DNA"/>
</dbReference>
<dbReference type="RefSeq" id="WP_000132407.1">
    <property type="nucleotide sequence ID" value="NC_012578.1"/>
</dbReference>
<dbReference type="SMR" id="C3LPF7"/>
<dbReference type="KEGG" id="vcm:VCM66_2075"/>
<dbReference type="HOGENOM" id="CLU_021802_4_0_6"/>
<dbReference type="UniPathway" id="UPA00034">
    <property type="reaction ID" value="UER00021"/>
</dbReference>
<dbReference type="Proteomes" id="UP000001217">
    <property type="component" value="Chromosome I"/>
</dbReference>
<dbReference type="GO" id="GO:0008777">
    <property type="term" value="F:acetylornithine deacetylase activity"/>
    <property type="evidence" value="ECO:0007669"/>
    <property type="project" value="TreeGrafter"/>
</dbReference>
<dbReference type="GO" id="GO:0050897">
    <property type="term" value="F:cobalt ion binding"/>
    <property type="evidence" value="ECO:0007669"/>
    <property type="project" value="UniProtKB-UniRule"/>
</dbReference>
<dbReference type="GO" id="GO:0009014">
    <property type="term" value="F:succinyl-diaminopimelate desuccinylase activity"/>
    <property type="evidence" value="ECO:0007669"/>
    <property type="project" value="UniProtKB-UniRule"/>
</dbReference>
<dbReference type="GO" id="GO:0008270">
    <property type="term" value="F:zinc ion binding"/>
    <property type="evidence" value="ECO:0007669"/>
    <property type="project" value="UniProtKB-UniRule"/>
</dbReference>
<dbReference type="GO" id="GO:0019877">
    <property type="term" value="P:diaminopimelate biosynthetic process"/>
    <property type="evidence" value="ECO:0007669"/>
    <property type="project" value="UniProtKB-UniRule"/>
</dbReference>
<dbReference type="GO" id="GO:0006526">
    <property type="term" value="P:L-arginine biosynthetic process"/>
    <property type="evidence" value="ECO:0007669"/>
    <property type="project" value="TreeGrafter"/>
</dbReference>
<dbReference type="GO" id="GO:0009089">
    <property type="term" value="P:lysine biosynthetic process via diaminopimelate"/>
    <property type="evidence" value="ECO:0007669"/>
    <property type="project" value="UniProtKB-UniRule"/>
</dbReference>
<dbReference type="CDD" id="cd03891">
    <property type="entry name" value="M20_DapE_proteobac"/>
    <property type="match status" value="1"/>
</dbReference>
<dbReference type="FunFam" id="3.30.70.360:FF:000011">
    <property type="entry name" value="Succinyl-diaminopimelate desuccinylase"/>
    <property type="match status" value="1"/>
</dbReference>
<dbReference type="FunFam" id="3.40.630.10:FF:000005">
    <property type="entry name" value="Succinyl-diaminopimelate desuccinylase"/>
    <property type="match status" value="1"/>
</dbReference>
<dbReference type="FunFam" id="3.40.630.10:FF:000010">
    <property type="entry name" value="Succinyl-diaminopimelate desuccinylase"/>
    <property type="match status" value="1"/>
</dbReference>
<dbReference type="Gene3D" id="3.40.630.10">
    <property type="entry name" value="Zn peptidases"/>
    <property type="match status" value="2"/>
</dbReference>
<dbReference type="HAMAP" id="MF_01690">
    <property type="entry name" value="DapE"/>
    <property type="match status" value="1"/>
</dbReference>
<dbReference type="InterPro" id="IPR001261">
    <property type="entry name" value="ArgE/DapE_CS"/>
</dbReference>
<dbReference type="InterPro" id="IPR036264">
    <property type="entry name" value="Bact_exopeptidase_dim_dom"/>
</dbReference>
<dbReference type="InterPro" id="IPR005941">
    <property type="entry name" value="DapE_proteobac"/>
</dbReference>
<dbReference type="InterPro" id="IPR002933">
    <property type="entry name" value="Peptidase_M20"/>
</dbReference>
<dbReference type="InterPro" id="IPR011650">
    <property type="entry name" value="Peptidase_M20_dimer"/>
</dbReference>
<dbReference type="InterPro" id="IPR050072">
    <property type="entry name" value="Peptidase_M20A"/>
</dbReference>
<dbReference type="NCBIfam" id="TIGR01246">
    <property type="entry name" value="dapE_proteo"/>
    <property type="match status" value="1"/>
</dbReference>
<dbReference type="NCBIfam" id="NF009557">
    <property type="entry name" value="PRK13009.1"/>
    <property type="match status" value="1"/>
</dbReference>
<dbReference type="PANTHER" id="PTHR43808">
    <property type="entry name" value="ACETYLORNITHINE DEACETYLASE"/>
    <property type="match status" value="1"/>
</dbReference>
<dbReference type="PANTHER" id="PTHR43808:SF31">
    <property type="entry name" value="N-ACETYL-L-CITRULLINE DEACETYLASE"/>
    <property type="match status" value="1"/>
</dbReference>
<dbReference type="Pfam" id="PF07687">
    <property type="entry name" value="M20_dimer"/>
    <property type="match status" value="1"/>
</dbReference>
<dbReference type="Pfam" id="PF01546">
    <property type="entry name" value="Peptidase_M20"/>
    <property type="match status" value="1"/>
</dbReference>
<dbReference type="SUPFAM" id="SSF55031">
    <property type="entry name" value="Bacterial exopeptidase dimerisation domain"/>
    <property type="match status" value="1"/>
</dbReference>
<dbReference type="SUPFAM" id="SSF53187">
    <property type="entry name" value="Zn-dependent exopeptidases"/>
    <property type="match status" value="1"/>
</dbReference>
<dbReference type="PROSITE" id="PS00759">
    <property type="entry name" value="ARGE_DAPE_CPG2_2"/>
    <property type="match status" value="1"/>
</dbReference>
<accession>C3LPF7</accession>
<sequence>MTDSPVLALAKELISRQSVTPADAGCQDLMIERLKALGFEIESMVFEDTTNFWARRGTQSPLFVFAGHTDVVPAGPLSQWHTPPFEPTVIDGFLHGRGAADMKGSLACMIVAVERFIAEHPDHQGSIGFLITSDEEGPFINGTVRVVETLMARNELIDMCIVGEPSSTLAVGDVVKNGRRGSITGDLKVKGTQGHVAYPHLANNPVHKALPALAELAATQWDEGNAYFPPTSFQIPNLQAGTGASNVIPGEFDVQFNFRFSTELTDEEIKRRVHSVLDAHGLDYDVKWTLSGQPFLTDTGELLAAVVAAVEEVNHQAPALLTTGGTSDGRFIAQMGAQVVELGPVNATIHKVNECVRIADLEKLTDMYQKTLNHLLG</sequence>
<comment type="function">
    <text evidence="1">Catalyzes the hydrolysis of N-succinyl-L,L-diaminopimelic acid (SDAP), forming succinate and LL-2,6-diaminopimelate (DAP), an intermediate involved in the bacterial biosynthesis of lysine and meso-diaminopimelic acid, an essential component of bacterial cell walls.</text>
</comment>
<comment type="catalytic activity">
    <reaction evidence="1">
        <text>N-succinyl-(2S,6S)-2,6-diaminopimelate + H2O = (2S,6S)-2,6-diaminopimelate + succinate</text>
        <dbReference type="Rhea" id="RHEA:22608"/>
        <dbReference type="ChEBI" id="CHEBI:15377"/>
        <dbReference type="ChEBI" id="CHEBI:30031"/>
        <dbReference type="ChEBI" id="CHEBI:57609"/>
        <dbReference type="ChEBI" id="CHEBI:58087"/>
        <dbReference type="EC" id="3.5.1.18"/>
    </reaction>
</comment>
<comment type="cofactor">
    <cofactor evidence="1">
        <name>Zn(2+)</name>
        <dbReference type="ChEBI" id="CHEBI:29105"/>
    </cofactor>
    <cofactor evidence="1">
        <name>Co(2+)</name>
        <dbReference type="ChEBI" id="CHEBI:48828"/>
    </cofactor>
    <text evidence="1">Binds 2 Zn(2+) or Co(2+) ions per subunit.</text>
</comment>
<comment type="pathway">
    <text evidence="1">Amino-acid biosynthesis; L-lysine biosynthesis via DAP pathway; LL-2,6-diaminopimelate from (S)-tetrahydrodipicolinate (succinylase route): step 3/3.</text>
</comment>
<comment type="subunit">
    <text evidence="1">Homodimer.</text>
</comment>
<comment type="similarity">
    <text evidence="1">Belongs to the peptidase M20A family. DapE subfamily.</text>
</comment>
<protein>
    <recommendedName>
        <fullName evidence="1">Succinyl-diaminopimelate desuccinylase</fullName>
        <shortName evidence="1">SDAP desuccinylase</shortName>
        <ecNumber evidence="1">3.5.1.18</ecNumber>
    </recommendedName>
    <alternativeName>
        <fullName evidence="1">N-succinyl-LL-2,6-diaminoheptanedioate amidohydrolase</fullName>
    </alternativeName>
</protein>
<gene>
    <name evidence="1" type="primary">dapE</name>
    <name type="ordered locus">VCM66_2075</name>
</gene>